<gene>
    <name type="primary">gst-9</name>
    <name type="ORF">R05F9.5</name>
</gene>
<protein>
    <recommendedName>
        <fullName>Probable glutathione S-transferase 9</fullName>
        <ecNumber>2.5.1.18</ecNumber>
    </recommendedName>
    <alternativeName>
        <fullName>GST class-sigma</fullName>
    </alternativeName>
</protein>
<name>GST9_CAEEL</name>
<accession>Q21743</accession>
<accession>Q21744</accession>
<organism>
    <name type="scientific">Caenorhabditis elegans</name>
    <dbReference type="NCBI Taxonomy" id="6239"/>
    <lineage>
        <taxon>Eukaryota</taxon>
        <taxon>Metazoa</taxon>
        <taxon>Ecdysozoa</taxon>
        <taxon>Nematoda</taxon>
        <taxon>Chromadorea</taxon>
        <taxon>Rhabditida</taxon>
        <taxon>Rhabditina</taxon>
        <taxon>Rhabditomorpha</taxon>
        <taxon>Rhabditoidea</taxon>
        <taxon>Rhabditidae</taxon>
        <taxon>Peloderinae</taxon>
        <taxon>Caenorhabditis</taxon>
    </lineage>
</organism>
<keyword id="KW-1185">Reference proteome</keyword>
<keyword id="KW-0808">Transferase</keyword>
<reference key="1">
    <citation type="journal article" date="1998" name="Science">
        <title>Genome sequence of the nematode C. elegans: a platform for investigating biology.</title>
        <authorList>
            <consortium name="The C. elegans sequencing consortium"/>
        </authorList>
    </citation>
    <scope>NUCLEOTIDE SEQUENCE [LARGE SCALE GENOMIC DNA]</scope>
    <source>
        <strain>Bristol N2</strain>
    </source>
</reference>
<evidence type="ECO:0000250" key="1">
    <source>
        <dbReference type="UniProtKB" id="O60760"/>
    </source>
</evidence>
<evidence type="ECO:0000250" key="2">
    <source>
        <dbReference type="UniProtKB" id="P46088"/>
    </source>
</evidence>
<evidence type="ECO:0000250" key="3">
    <source>
        <dbReference type="UniProtKB" id="P46436"/>
    </source>
</evidence>
<evidence type="ECO:0000305" key="4"/>
<dbReference type="EC" id="2.5.1.18"/>
<dbReference type="EMBL" id="FO081120">
    <property type="protein sequence ID" value="CCD69273.1"/>
    <property type="molecule type" value="Genomic_DNA"/>
</dbReference>
<dbReference type="PIR" id="T16683">
    <property type="entry name" value="T16683"/>
</dbReference>
<dbReference type="PIR" id="T16685">
    <property type="entry name" value="T16685"/>
</dbReference>
<dbReference type="RefSeq" id="NP_001022266.1">
    <property type="nucleotide sequence ID" value="NM_001027095.3"/>
</dbReference>
<dbReference type="SMR" id="Q21743"/>
<dbReference type="FunCoup" id="Q21743">
    <property type="interactions" value="120"/>
</dbReference>
<dbReference type="STRING" id="6239.R05F9.5.1"/>
<dbReference type="PaxDb" id="6239-R05F9.5"/>
<dbReference type="PeptideAtlas" id="Q21743"/>
<dbReference type="EnsemblMetazoa" id="R05F9.5.1">
    <property type="protein sequence ID" value="R05F9.5.1"/>
    <property type="gene ID" value="WBGene00001757"/>
</dbReference>
<dbReference type="GeneID" id="187615"/>
<dbReference type="KEGG" id="cel:CELE_R05F9.5"/>
<dbReference type="UCSC" id="R05F9.5">
    <property type="organism name" value="c. elegans"/>
</dbReference>
<dbReference type="AGR" id="WB:WBGene00001757"/>
<dbReference type="CTD" id="187615"/>
<dbReference type="WormBase" id="R05F9.5">
    <property type="protein sequence ID" value="CE04807"/>
    <property type="gene ID" value="WBGene00001757"/>
    <property type="gene designation" value="gst-9"/>
</dbReference>
<dbReference type="eggNOG" id="KOG1695">
    <property type="taxonomic scope" value="Eukaryota"/>
</dbReference>
<dbReference type="GeneTree" id="ENSGT00970000196005"/>
<dbReference type="HOGENOM" id="CLU_039475_1_0_1"/>
<dbReference type="InParanoid" id="Q21743"/>
<dbReference type="OMA" id="KLMTFMA"/>
<dbReference type="OrthoDB" id="414243at2759"/>
<dbReference type="PhylomeDB" id="Q21743"/>
<dbReference type="PRO" id="PR:Q21743"/>
<dbReference type="Proteomes" id="UP000001940">
    <property type="component" value="Chromosome II"/>
</dbReference>
<dbReference type="GO" id="GO:0004364">
    <property type="term" value="F:glutathione transferase activity"/>
    <property type="evidence" value="ECO:0000318"/>
    <property type="project" value="GO_Central"/>
</dbReference>
<dbReference type="GO" id="GO:0006749">
    <property type="term" value="P:glutathione metabolic process"/>
    <property type="evidence" value="ECO:0000318"/>
    <property type="project" value="GO_Central"/>
</dbReference>
<dbReference type="CDD" id="cd03192">
    <property type="entry name" value="GST_C_Sigma_like"/>
    <property type="match status" value="1"/>
</dbReference>
<dbReference type="CDD" id="cd03039">
    <property type="entry name" value="GST_N_Sigma_like"/>
    <property type="match status" value="1"/>
</dbReference>
<dbReference type="FunFam" id="1.20.1050.10:FF:000031">
    <property type="entry name" value="Glutathione S-Transferase"/>
    <property type="match status" value="1"/>
</dbReference>
<dbReference type="FunFam" id="3.40.30.10:FF:000035">
    <property type="entry name" value="hematopoietic prostaglandin D synthase"/>
    <property type="match status" value="1"/>
</dbReference>
<dbReference type="Gene3D" id="1.20.1050.10">
    <property type="match status" value="1"/>
</dbReference>
<dbReference type="Gene3D" id="3.40.30.10">
    <property type="entry name" value="Glutaredoxin"/>
    <property type="match status" value="1"/>
</dbReference>
<dbReference type="InterPro" id="IPR010987">
    <property type="entry name" value="Glutathione-S-Trfase_C-like"/>
</dbReference>
<dbReference type="InterPro" id="IPR036282">
    <property type="entry name" value="Glutathione-S-Trfase_C_sf"/>
</dbReference>
<dbReference type="InterPro" id="IPR004045">
    <property type="entry name" value="Glutathione_S-Trfase_N"/>
</dbReference>
<dbReference type="InterPro" id="IPR004046">
    <property type="entry name" value="GST_C"/>
</dbReference>
<dbReference type="InterPro" id="IPR050213">
    <property type="entry name" value="GST_superfamily"/>
</dbReference>
<dbReference type="InterPro" id="IPR036249">
    <property type="entry name" value="Thioredoxin-like_sf"/>
</dbReference>
<dbReference type="PANTHER" id="PTHR11571">
    <property type="entry name" value="GLUTATHIONE S-TRANSFERASE"/>
    <property type="match status" value="1"/>
</dbReference>
<dbReference type="PANTHER" id="PTHR11571:SF267">
    <property type="entry name" value="GLUTATHIONE S-TRANSFERASE 9-RELATED"/>
    <property type="match status" value="1"/>
</dbReference>
<dbReference type="Pfam" id="PF14497">
    <property type="entry name" value="GST_C_3"/>
    <property type="match status" value="1"/>
</dbReference>
<dbReference type="Pfam" id="PF02798">
    <property type="entry name" value="GST_N"/>
    <property type="match status" value="1"/>
</dbReference>
<dbReference type="SFLD" id="SFLDG01205">
    <property type="entry name" value="AMPS.1"/>
    <property type="match status" value="1"/>
</dbReference>
<dbReference type="SFLD" id="SFLDG00363">
    <property type="entry name" value="AMPS_(cytGST):_Alpha-__Mu-__Pi"/>
    <property type="match status" value="1"/>
</dbReference>
<dbReference type="SUPFAM" id="SSF47616">
    <property type="entry name" value="GST C-terminal domain-like"/>
    <property type="match status" value="1"/>
</dbReference>
<dbReference type="SUPFAM" id="SSF52833">
    <property type="entry name" value="Thioredoxin-like"/>
    <property type="match status" value="1"/>
</dbReference>
<dbReference type="PROSITE" id="PS50405">
    <property type="entry name" value="GST_CTER"/>
    <property type="match status" value="1"/>
</dbReference>
<dbReference type="PROSITE" id="PS50404">
    <property type="entry name" value="GST_NTER"/>
    <property type="match status" value="1"/>
</dbReference>
<feature type="chain" id="PRO_0000185932" description="Probable glutathione S-transferase 9">
    <location>
        <begin position="1"/>
        <end position="206"/>
    </location>
</feature>
<feature type="domain" description="GST N-terminal">
    <location>
        <begin position="2"/>
        <end position="79"/>
    </location>
</feature>
<feature type="domain" description="GST C-terminal">
    <location>
        <begin position="81"/>
        <end position="206"/>
    </location>
</feature>
<feature type="binding site" evidence="1">
    <location>
        <position position="8"/>
    </location>
    <ligand>
        <name>glutathione</name>
        <dbReference type="ChEBI" id="CHEBI:57925"/>
    </ligand>
</feature>
<feature type="binding site" evidence="1">
    <location>
        <position position="39"/>
    </location>
    <ligand>
        <name>glutathione</name>
        <dbReference type="ChEBI" id="CHEBI:57925"/>
    </ligand>
</feature>
<feature type="binding site" evidence="2">
    <location>
        <position position="43"/>
    </location>
    <ligand>
        <name>glutathione</name>
        <dbReference type="ChEBI" id="CHEBI:57925"/>
    </ligand>
</feature>
<feature type="binding site" evidence="1">
    <location>
        <begin position="49"/>
        <end position="51"/>
    </location>
    <ligand>
        <name>glutathione</name>
        <dbReference type="ChEBI" id="CHEBI:57925"/>
    </ligand>
</feature>
<feature type="binding site" evidence="1">
    <location>
        <begin position="63"/>
        <end position="64"/>
    </location>
    <ligand>
        <name>glutathione</name>
        <dbReference type="ChEBI" id="CHEBI:57925"/>
    </ligand>
</feature>
<sequence length="206" mass="23537">MVSYKLIYFQSRGNGEIARQVFAFAGQEFIDERISKEQWAEIKNMTPFGQVPVLEVDGRQLAQSITIVRYLSKQFGISGKSSWEEAQVDALGDQFKDYRVEARPFFRAKMGFSDGDVDQLYKDLFVPAFNKMYSIFTESLKSSGSGFLVGDSLTWMDLAIAQHSADLLEADGKILDTFLEMKDHQKKIHSIPNVKKWIEKRPVTSR</sequence>
<proteinExistence type="inferred from homology"/>
<comment type="function">
    <text evidence="3">Conjugation of reduced glutathione to a wide number of exogenous and endogenous hydrophobic electrophiles.</text>
</comment>
<comment type="catalytic activity">
    <reaction evidence="3">
        <text>RX + glutathione = an S-substituted glutathione + a halide anion + H(+)</text>
        <dbReference type="Rhea" id="RHEA:16437"/>
        <dbReference type="ChEBI" id="CHEBI:15378"/>
        <dbReference type="ChEBI" id="CHEBI:16042"/>
        <dbReference type="ChEBI" id="CHEBI:17792"/>
        <dbReference type="ChEBI" id="CHEBI:57925"/>
        <dbReference type="ChEBI" id="CHEBI:90779"/>
        <dbReference type="EC" id="2.5.1.18"/>
    </reaction>
</comment>
<comment type="similarity">
    <text evidence="4">Belongs to the GST superfamily. Sigma family.</text>
</comment>